<accession>Q8IM46</accession>
<accession>A0A144A3F9</accession>
<feature type="signal peptide" evidence="1">
    <location>
        <begin position="1"/>
        <end position="35"/>
    </location>
</feature>
<feature type="chain" id="PRO_0000361762" description="Uncharacterized protein PF3D7_1404800" evidence="1">
    <location>
        <begin position="36"/>
        <end position="954"/>
    </location>
</feature>
<feature type="region of interest" description="Disordered" evidence="2">
    <location>
        <begin position="733"/>
        <end position="765"/>
    </location>
</feature>
<feature type="coiled-coil region" evidence="1">
    <location>
        <begin position="381"/>
        <end position="415"/>
    </location>
</feature>
<feature type="compositionally biased region" description="Low complexity" evidence="2">
    <location>
        <begin position="736"/>
        <end position="763"/>
    </location>
</feature>
<protein>
    <recommendedName>
        <fullName>Uncharacterized protein PF3D7_1404800</fullName>
    </recommendedName>
</protein>
<sequence length="954" mass="112797">MKILFNNTFELFCLFVFVTWALFLNNNGILYPVHCLKSAGDTYVDTLRGSNFNNEFIDLLSTRDICNTIKNYITREQIKCAISYDVLNISNIINSLEKTLLRDHNIIINGKEDILKKYLNTFLTLYIKRQSEDVNNFIKKFSNSKLDVVINYRYYEEKFLSEYEEIDSLKKGFSNHISEIKDILNNISSSNNYKKKSGVIYFPDVKETLYSKIQILKEILCKLRNKVSFMYNINFALDEFKENFDKQVYNFKGKEGLNDFVRITSDITNPTSTFTNVVDINKFNVNTQMDEIQNGTLSKEHLNDFRRNIINLDVHIRDPSSFCVNQVENPTEMNINNPCNNNDGNNINCKDLVEEDAMLNHFSFLLHHLEKMTCILIFSLKNKISSARDDIQKDINKMESELINVSNEINRLDIVVDVPQHHILNYHNKNENKVFNLMNIKNEYYEYLGGHNKINNNFDDFDNTLMLLERKTNWIKDQNIMTYGDREDIHEAISSTLEMIDKLKDMYVTENFNLLITYENLYKEINLFLYNKQYNISEEAYIYAWNSLENFKGKKLLTEGIDRLLGSVMSISYVIKYVKVANKHLNPQICFNLNKLSNAFMNIEEKLVLYRNQFYRLNHDITTLKLFKNNIEKLGYAYRDNMNKVHINMDTYNIATENLQHEIDNILENISDVLYEDMLINELKTMRATWKNFVYVKYDYFKQNNKLIEEFDENKLIIFPPQFGLMKQSEQTNIRNDNNNNNNNNNNNSNNNNNNNNNNKDNSVASLGSSILTRTSSPDNYLIGQNFIKSPYYNLLYEFATEKINCAKTPEERIKSFGEIYRTIDRVSSVIKENRKNLRSKYDNMRIEILKLIDYRKHTFEETKDVHKELIRLEGFILNTLDNLFAKRMTLSVQMKNSVEMLKGSLYKDKLPDYCKAVEMFIPKYFLTMTRWRNFLLEYRKIMPSRVISKFYST</sequence>
<proteinExistence type="evidence at protein level"/>
<name>YPF02_PLAF7</name>
<comment type="biotechnology">
    <text evidence="3">Possible candidate for an effective malaria vaccine as determined by epitope response in sera.</text>
</comment>
<organism>
    <name type="scientific">Plasmodium falciparum (isolate 3D7)</name>
    <dbReference type="NCBI Taxonomy" id="36329"/>
    <lineage>
        <taxon>Eukaryota</taxon>
        <taxon>Sar</taxon>
        <taxon>Alveolata</taxon>
        <taxon>Apicomplexa</taxon>
        <taxon>Aconoidasida</taxon>
        <taxon>Haemosporida</taxon>
        <taxon>Plasmodiidae</taxon>
        <taxon>Plasmodium</taxon>
        <taxon>Plasmodium (Laverania)</taxon>
    </lineage>
</organism>
<keyword id="KW-0175">Coiled coil</keyword>
<keyword id="KW-0477">Merozoite</keyword>
<keyword id="KW-1185">Reference proteome</keyword>
<keyword id="KW-0732">Signal</keyword>
<dbReference type="EMBL" id="LN999946">
    <property type="protein sequence ID" value="CZT99755.1"/>
    <property type="molecule type" value="Genomic_DNA"/>
</dbReference>
<dbReference type="RefSeq" id="XP_001348218.1">
    <property type="nucleotide sequence ID" value="XM_001348182.1"/>
</dbReference>
<dbReference type="SMR" id="Q8IM46"/>
<dbReference type="FunCoup" id="Q8IM46">
    <property type="interactions" value="41"/>
</dbReference>
<dbReference type="STRING" id="36329.Q8IM46"/>
<dbReference type="PaxDb" id="5833-PF14_0045"/>
<dbReference type="EnsemblProtists" id="CZT99755">
    <property type="protein sequence ID" value="CZT99755"/>
    <property type="gene ID" value="PF3D7_1404800"/>
</dbReference>
<dbReference type="GeneID" id="811627"/>
<dbReference type="KEGG" id="pfa:PF3D7_1404800"/>
<dbReference type="VEuPathDB" id="PlasmoDB:PF3D7_1404800"/>
<dbReference type="HOGENOM" id="CLU_307062_0_0_1"/>
<dbReference type="InParanoid" id="Q8IM46"/>
<dbReference type="OrthoDB" id="392364at2759"/>
<dbReference type="PhylomeDB" id="Q8IM46"/>
<dbReference type="Proteomes" id="UP000001450">
    <property type="component" value="Chromosome 14"/>
</dbReference>
<dbReference type="GO" id="GO:0043657">
    <property type="term" value="C:host cell"/>
    <property type="evidence" value="ECO:0000314"/>
    <property type="project" value="GeneDB"/>
</dbReference>
<gene>
    <name type="ORF">PF14_0045</name>
    <name type="ORF">PF3D7_1404800</name>
</gene>
<reference key="1">
    <citation type="journal article" date="2002" name="Nature">
        <title>Genome sequence of the human malaria parasite Plasmodium falciparum.</title>
        <authorList>
            <person name="Gardner M.J."/>
            <person name="Hall N."/>
            <person name="Fung E."/>
            <person name="White O."/>
            <person name="Berriman M."/>
            <person name="Hyman R.W."/>
            <person name="Carlton J.M."/>
            <person name="Pain A."/>
            <person name="Nelson K.E."/>
            <person name="Bowman S."/>
            <person name="Paulsen I.T."/>
            <person name="James K.D."/>
            <person name="Eisen J.A."/>
            <person name="Rutherford K.M."/>
            <person name="Salzberg S.L."/>
            <person name="Craig A."/>
            <person name="Kyes S."/>
            <person name="Chan M.-S."/>
            <person name="Nene V."/>
            <person name="Shallom S.J."/>
            <person name="Suh B."/>
            <person name="Peterson J."/>
            <person name="Angiuoli S."/>
            <person name="Pertea M."/>
            <person name="Allen J."/>
            <person name="Selengut J."/>
            <person name="Haft D."/>
            <person name="Mather M.W."/>
            <person name="Vaidya A.B."/>
            <person name="Martin D.M.A."/>
            <person name="Fairlamb A.H."/>
            <person name="Fraunholz M.J."/>
            <person name="Roos D.S."/>
            <person name="Ralph S.A."/>
            <person name="McFadden G.I."/>
            <person name="Cummings L.M."/>
            <person name="Subramanian G.M."/>
            <person name="Mungall C."/>
            <person name="Venter J.C."/>
            <person name="Carucci D.J."/>
            <person name="Hoffman S.L."/>
            <person name="Newbold C."/>
            <person name="Davis R.W."/>
            <person name="Fraser C.M."/>
            <person name="Barrell B.G."/>
        </authorList>
    </citation>
    <scope>NUCLEOTIDE SEQUENCE [LARGE SCALE GENOMIC DNA]</scope>
    <source>
        <strain>3D7</strain>
    </source>
</reference>
<reference evidence="4" key="2">
    <citation type="journal article" date="2007" name="PLoS ONE">
        <title>Rapid identification of malaria vaccine candidates based on alpha-helical coiled coil protein motif.</title>
        <authorList>
            <person name="Villard V."/>
            <person name="Agak G.W."/>
            <person name="Frank G."/>
            <person name="Jafarshad A."/>
            <person name="Servis C."/>
            <person name="Nebie I."/>
            <person name="Sirima S.B."/>
            <person name="Felger I."/>
            <person name="Arevalo-Herrera M."/>
            <person name="Herrera S."/>
            <person name="Heitz F."/>
            <person name="Baecker V."/>
            <person name="Druilhe P."/>
            <person name="Kajava A.V."/>
            <person name="Corradin G."/>
        </authorList>
    </citation>
    <scope>SYNTHESIS OF 387-413</scope>
    <scope>POSSIBLE CANDIDATE MALARIA EPITOPE</scope>
</reference>
<evidence type="ECO:0000255" key="1"/>
<evidence type="ECO:0000256" key="2">
    <source>
        <dbReference type="SAM" id="MobiDB-lite"/>
    </source>
</evidence>
<evidence type="ECO:0000269" key="3">
    <source>
    </source>
</evidence>
<evidence type="ECO:0000305" key="4"/>